<sequence length="296" mass="31498">MTTLENPEMQAQLLSAALPYMQRYENKHVVVKYGGHAMGNPELGKAFARDVALLKQSGVNPIVVHGGGPQIQAMLTKLGIESRFEGGLRVTDEKTVEVVEMVLAGSINKEIVALINAEGEWAIGLCGKDGNMVFAQKAHKTVIDPDSNIEKVLDLGFVGEPAEVDRTLLDLLARSEMIPVIAPVAPGRDGHTYNINADTFAGAIAGALAATRLLFLTNVPGVLDKDKKLIKELSVADAQALIRDGTISGGMIPKVETCIDAIRRGVEGVVILNGKTPHSVLLELFTEHGAGTLIVP</sequence>
<organism>
    <name type="scientific">Brucella abortus (strain S19)</name>
    <dbReference type="NCBI Taxonomy" id="430066"/>
    <lineage>
        <taxon>Bacteria</taxon>
        <taxon>Pseudomonadati</taxon>
        <taxon>Pseudomonadota</taxon>
        <taxon>Alphaproteobacteria</taxon>
        <taxon>Hyphomicrobiales</taxon>
        <taxon>Brucellaceae</taxon>
        <taxon>Brucella/Ochrobactrum group</taxon>
        <taxon>Brucella</taxon>
    </lineage>
</organism>
<name>ARGB_BRUA1</name>
<dbReference type="EC" id="2.7.2.8" evidence="1"/>
<dbReference type="EMBL" id="CP000888">
    <property type="protein sequence ID" value="ACD74399.1"/>
    <property type="molecule type" value="Genomic_DNA"/>
</dbReference>
<dbReference type="RefSeq" id="WP_002965625.1">
    <property type="nucleotide sequence ID" value="NC_010740.1"/>
</dbReference>
<dbReference type="SMR" id="B2SC12"/>
<dbReference type="GeneID" id="93015191"/>
<dbReference type="KEGG" id="bmc:BAbS19_II09140"/>
<dbReference type="HOGENOM" id="CLU_053680_0_0_5"/>
<dbReference type="UniPathway" id="UPA00068">
    <property type="reaction ID" value="UER00107"/>
</dbReference>
<dbReference type="Proteomes" id="UP000002565">
    <property type="component" value="Chromosome 2"/>
</dbReference>
<dbReference type="GO" id="GO:0005737">
    <property type="term" value="C:cytoplasm"/>
    <property type="evidence" value="ECO:0007669"/>
    <property type="project" value="UniProtKB-SubCell"/>
</dbReference>
<dbReference type="GO" id="GO:0003991">
    <property type="term" value="F:acetylglutamate kinase activity"/>
    <property type="evidence" value="ECO:0007669"/>
    <property type="project" value="UniProtKB-UniRule"/>
</dbReference>
<dbReference type="GO" id="GO:0005524">
    <property type="term" value="F:ATP binding"/>
    <property type="evidence" value="ECO:0007669"/>
    <property type="project" value="UniProtKB-UniRule"/>
</dbReference>
<dbReference type="GO" id="GO:0042450">
    <property type="term" value="P:arginine biosynthetic process via ornithine"/>
    <property type="evidence" value="ECO:0007669"/>
    <property type="project" value="UniProtKB-UniRule"/>
</dbReference>
<dbReference type="GO" id="GO:0006526">
    <property type="term" value="P:L-arginine biosynthetic process"/>
    <property type="evidence" value="ECO:0007669"/>
    <property type="project" value="UniProtKB-UniPathway"/>
</dbReference>
<dbReference type="CDD" id="cd04250">
    <property type="entry name" value="AAK_NAGK-C"/>
    <property type="match status" value="1"/>
</dbReference>
<dbReference type="FunFam" id="3.40.1160.10:FF:000004">
    <property type="entry name" value="Acetylglutamate kinase"/>
    <property type="match status" value="1"/>
</dbReference>
<dbReference type="Gene3D" id="3.40.1160.10">
    <property type="entry name" value="Acetylglutamate kinase-like"/>
    <property type="match status" value="1"/>
</dbReference>
<dbReference type="HAMAP" id="MF_00082">
    <property type="entry name" value="ArgB"/>
    <property type="match status" value="1"/>
</dbReference>
<dbReference type="InterPro" id="IPR036393">
    <property type="entry name" value="AceGlu_kinase-like_sf"/>
</dbReference>
<dbReference type="InterPro" id="IPR004662">
    <property type="entry name" value="AcgluKinase_fam"/>
</dbReference>
<dbReference type="InterPro" id="IPR037528">
    <property type="entry name" value="ArgB"/>
</dbReference>
<dbReference type="InterPro" id="IPR001048">
    <property type="entry name" value="Asp/Glu/Uridylate_kinase"/>
</dbReference>
<dbReference type="InterPro" id="IPR041727">
    <property type="entry name" value="NAGK-C"/>
</dbReference>
<dbReference type="NCBIfam" id="TIGR00761">
    <property type="entry name" value="argB"/>
    <property type="match status" value="1"/>
</dbReference>
<dbReference type="PANTHER" id="PTHR23342">
    <property type="entry name" value="N-ACETYLGLUTAMATE SYNTHASE"/>
    <property type="match status" value="1"/>
</dbReference>
<dbReference type="PANTHER" id="PTHR23342:SF0">
    <property type="entry name" value="N-ACETYLGLUTAMATE SYNTHASE, MITOCHONDRIAL"/>
    <property type="match status" value="1"/>
</dbReference>
<dbReference type="Pfam" id="PF00696">
    <property type="entry name" value="AA_kinase"/>
    <property type="match status" value="1"/>
</dbReference>
<dbReference type="PIRSF" id="PIRSF000728">
    <property type="entry name" value="NAGK"/>
    <property type="match status" value="1"/>
</dbReference>
<dbReference type="SUPFAM" id="SSF53633">
    <property type="entry name" value="Carbamate kinase-like"/>
    <property type="match status" value="1"/>
</dbReference>
<gene>
    <name evidence="1" type="primary">argB</name>
    <name type="ordered locus">BAbS19_II09140</name>
</gene>
<reference key="1">
    <citation type="journal article" date="2008" name="PLoS ONE">
        <title>Genome sequence of Brucella abortus vaccine strain S19 compared to virulent strains yields candidate virulence genes.</title>
        <authorList>
            <person name="Crasta O.R."/>
            <person name="Folkerts O."/>
            <person name="Fei Z."/>
            <person name="Mane S.P."/>
            <person name="Evans C."/>
            <person name="Martino-Catt S."/>
            <person name="Bricker B."/>
            <person name="Yu G."/>
            <person name="Du L."/>
            <person name="Sobral B.W."/>
        </authorList>
    </citation>
    <scope>NUCLEOTIDE SEQUENCE [LARGE SCALE GENOMIC DNA]</scope>
    <source>
        <strain>S19</strain>
    </source>
</reference>
<feature type="chain" id="PRO_1000092848" description="Acetylglutamate kinase">
    <location>
        <begin position="1"/>
        <end position="296"/>
    </location>
</feature>
<feature type="binding site" evidence="1">
    <location>
        <begin position="67"/>
        <end position="68"/>
    </location>
    <ligand>
        <name>substrate</name>
    </ligand>
</feature>
<feature type="binding site" evidence="1">
    <location>
        <position position="89"/>
    </location>
    <ligand>
        <name>substrate</name>
    </ligand>
</feature>
<feature type="binding site" evidence="1">
    <location>
        <position position="194"/>
    </location>
    <ligand>
        <name>substrate</name>
    </ligand>
</feature>
<feature type="site" description="Transition state stabilizer" evidence="1">
    <location>
        <position position="32"/>
    </location>
</feature>
<feature type="site" description="Transition state stabilizer" evidence="1">
    <location>
        <position position="254"/>
    </location>
</feature>
<comment type="function">
    <text evidence="1">Catalyzes the ATP-dependent phosphorylation of N-acetyl-L-glutamate.</text>
</comment>
<comment type="catalytic activity">
    <reaction evidence="1">
        <text>N-acetyl-L-glutamate + ATP = N-acetyl-L-glutamyl 5-phosphate + ADP</text>
        <dbReference type="Rhea" id="RHEA:14629"/>
        <dbReference type="ChEBI" id="CHEBI:30616"/>
        <dbReference type="ChEBI" id="CHEBI:44337"/>
        <dbReference type="ChEBI" id="CHEBI:57936"/>
        <dbReference type="ChEBI" id="CHEBI:456216"/>
        <dbReference type="EC" id="2.7.2.8"/>
    </reaction>
</comment>
<comment type="pathway">
    <text evidence="1">Amino-acid biosynthesis; L-arginine biosynthesis; N(2)-acetyl-L-ornithine from L-glutamate: step 2/4.</text>
</comment>
<comment type="subcellular location">
    <subcellularLocation>
        <location evidence="1">Cytoplasm</location>
    </subcellularLocation>
</comment>
<comment type="similarity">
    <text evidence="1">Belongs to the acetylglutamate kinase family. ArgB subfamily.</text>
</comment>
<keyword id="KW-0028">Amino-acid biosynthesis</keyword>
<keyword id="KW-0055">Arginine biosynthesis</keyword>
<keyword id="KW-0067">ATP-binding</keyword>
<keyword id="KW-0963">Cytoplasm</keyword>
<keyword id="KW-0418">Kinase</keyword>
<keyword id="KW-0547">Nucleotide-binding</keyword>
<keyword id="KW-0808">Transferase</keyword>
<evidence type="ECO:0000255" key="1">
    <source>
        <dbReference type="HAMAP-Rule" id="MF_00082"/>
    </source>
</evidence>
<protein>
    <recommendedName>
        <fullName evidence="1">Acetylglutamate kinase</fullName>
        <ecNumber evidence="1">2.7.2.8</ecNumber>
    </recommendedName>
    <alternativeName>
        <fullName evidence="1">N-acetyl-L-glutamate 5-phosphotransferase</fullName>
    </alternativeName>
    <alternativeName>
        <fullName evidence="1">NAG kinase</fullName>
        <shortName evidence="1">NAGK</shortName>
    </alternativeName>
</protein>
<proteinExistence type="inferred from homology"/>
<accession>B2SC12</accession>